<comment type="function">
    <text evidence="1">Represses a number of genes involved in the response to DNA damage (SOS response), including recA and lexA. In the presence of single-stranded DNA, RecA interacts with LexA causing an autocatalytic cleavage which disrupts the DNA-binding part of LexA, leading to derepression of the SOS regulon and eventually DNA repair.</text>
</comment>
<comment type="catalytic activity">
    <reaction evidence="1">
        <text>Hydrolysis of Ala-|-Gly bond in repressor LexA.</text>
        <dbReference type="EC" id="3.4.21.88"/>
    </reaction>
</comment>
<comment type="subunit">
    <text evidence="1">Homodimer.</text>
</comment>
<comment type="similarity">
    <text evidence="1">Belongs to the peptidase S24 family.</text>
</comment>
<comment type="sequence caution" evidence="2">
    <conflict type="erroneous initiation">
        <sequence resource="EMBL-CDS" id="ABQ88858"/>
    </conflict>
</comment>
<protein>
    <recommendedName>
        <fullName evidence="1">LexA repressor</fullName>
        <ecNumber evidence="1">3.4.21.88</ecNumber>
    </recommendedName>
</protein>
<feature type="chain" id="PRO_0000322758" description="LexA repressor">
    <location>
        <begin position="1"/>
        <end position="218"/>
    </location>
</feature>
<feature type="DNA-binding region" description="H-T-H motif" evidence="1">
    <location>
        <begin position="31"/>
        <end position="51"/>
    </location>
</feature>
<feature type="active site" description="For autocatalytic cleavage activity" evidence="1">
    <location>
        <position position="137"/>
    </location>
</feature>
<feature type="active site" description="For autocatalytic cleavage activity" evidence="1">
    <location>
        <position position="176"/>
    </location>
</feature>
<feature type="site" description="Cleavage; by autolysis" evidence="1">
    <location>
        <begin position="95"/>
        <end position="96"/>
    </location>
</feature>
<organism>
    <name type="scientific">Roseiflexus sp. (strain RS-1)</name>
    <dbReference type="NCBI Taxonomy" id="357808"/>
    <lineage>
        <taxon>Bacteria</taxon>
        <taxon>Bacillati</taxon>
        <taxon>Chloroflexota</taxon>
        <taxon>Chloroflexia</taxon>
        <taxon>Chloroflexales</taxon>
        <taxon>Roseiflexineae</taxon>
        <taxon>Roseiflexaceae</taxon>
        <taxon>Roseiflexus</taxon>
    </lineage>
</organism>
<keyword id="KW-0068">Autocatalytic cleavage</keyword>
<keyword id="KW-0227">DNA damage</keyword>
<keyword id="KW-0234">DNA repair</keyword>
<keyword id="KW-0235">DNA replication</keyword>
<keyword id="KW-0238">DNA-binding</keyword>
<keyword id="KW-0378">Hydrolase</keyword>
<keyword id="KW-0678">Repressor</keyword>
<keyword id="KW-0742">SOS response</keyword>
<keyword id="KW-0804">Transcription</keyword>
<keyword id="KW-0805">Transcription regulation</keyword>
<reference key="1">
    <citation type="submission" date="2007-04" db="EMBL/GenBank/DDBJ databases">
        <title>Complete sequence of Roseiflexus sp. RS-1.</title>
        <authorList>
            <consortium name="US DOE Joint Genome Institute"/>
            <person name="Copeland A."/>
            <person name="Lucas S."/>
            <person name="Lapidus A."/>
            <person name="Barry K."/>
            <person name="Detter J.C."/>
            <person name="Glavina del Rio T."/>
            <person name="Hammon N."/>
            <person name="Israni S."/>
            <person name="Dalin E."/>
            <person name="Tice H."/>
            <person name="Pitluck S."/>
            <person name="Chertkov O."/>
            <person name="Brettin T."/>
            <person name="Bruce D."/>
            <person name="Han C."/>
            <person name="Schmutz J."/>
            <person name="Larimer F."/>
            <person name="Land M."/>
            <person name="Hauser L."/>
            <person name="Kyrpides N."/>
            <person name="Mikhailova N."/>
            <person name="Bryant D.A."/>
            <person name="Richardson P."/>
        </authorList>
    </citation>
    <scope>NUCLEOTIDE SEQUENCE [LARGE SCALE GENOMIC DNA]</scope>
    <source>
        <strain>RS-1</strain>
    </source>
</reference>
<dbReference type="EC" id="3.4.21.88" evidence="1"/>
<dbReference type="EMBL" id="CP000686">
    <property type="protein sequence ID" value="ABQ88858.1"/>
    <property type="status" value="ALT_INIT"/>
    <property type="molecule type" value="Genomic_DNA"/>
</dbReference>
<dbReference type="RefSeq" id="WP_041332785.1">
    <property type="nucleotide sequence ID" value="NC_009523.1"/>
</dbReference>
<dbReference type="SMR" id="A5UQF5"/>
<dbReference type="STRING" id="357808.RoseRS_0427"/>
<dbReference type="MEROPS" id="S24.001"/>
<dbReference type="KEGG" id="rrs:RoseRS_0427"/>
<dbReference type="eggNOG" id="COG1974">
    <property type="taxonomic scope" value="Bacteria"/>
</dbReference>
<dbReference type="HOGENOM" id="CLU_066192_45_2_0"/>
<dbReference type="OrthoDB" id="9802364at2"/>
<dbReference type="Proteomes" id="UP000006554">
    <property type="component" value="Chromosome"/>
</dbReference>
<dbReference type="GO" id="GO:0003677">
    <property type="term" value="F:DNA binding"/>
    <property type="evidence" value="ECO:0007669"/>
    <property type="project" value="UniProtKB-UniRule"/>
</dbReference>
<dbReference type="GO" id="GO:0004252">
    <property type="term" value="F:serine-type endopeptidase activity"/>
    <property type="evidence" value="ECO:0007669"/>
    <property type="project" value="UniProtKB-UniRule"/>
</dbReference>
<dbReference type="GO" id="GO:0006281">
    <property type="term" value="P:DNA repair"/>
    <property type="evidence" value="ECO:0007669"/>
    <property type="project" value="UniProtKB-UniRule"/>
</dbReference>
<dbReference type="GO" id="GO:0006260">
    <property type="term" value="P:DNA replication"/>
    <property type="evidence" value="ECO:0007669"/>
    <property type="project" value="UniProtKB-UniRule"/>
</dbReference>
<dbReference type="GO" id="GO:0045892">
    <property type="term" value="P:negative regulation of DNA-templated transcription"/>
    <property type="evidence" value="ECO:0007669"/>
    <property type="project" value="UniProtKB-UniRule"/>
</dbReference>
<dbReference type="GO" id="GO:0006508">
    <property type="term" value="P:proteolysis"/>
    <property type="evidence" value="ECO:0007669"/>
    <property type="project" value="InterPro"/>
</dbReference>
<dbReference type="GO" id="GO:0009432">
    <property type="term" value="P:SOS response"/>
    <property type="evidence" value="ECO:0007669"/>
    <property type="project" value="UniProtKB-UniRule"/>
</dbReference>
<dbReference type="CDD" id="cd06529">
    <property type="entry name" value="S24_LexA-like"/>
    <property type="match status" value="1"/>
</dbReference>
<dbReference type="Gene3D" id="2.10.109.10">
    <property type="entry name" value="Umud Fragment, subunit A"/>
    <property type="match status" value="1"/>
</dbReference>
<dbReference type="Gene3D" id="1.10.10.10">
    <property type="entry name" value="Winged helix-like DNA-binding domain superfamily/Winged helix DNA-binding domain"/>
    <property type="match status" value="1"/>
</dbReference>
<dbReference type="HAMAP" id="MF_00015">
    <property type="entry name" value="LexA"/>
    <property type="match status" value="1"/>
</dbReference>
<dbReference type="InterPro" id="IPR006200">
    <property type="entry name" value="LexA"/>
</dbReference>
<dbReference type="InterPro" id="IPR039418">
    <property type="entry name" value="LexA-like"/>
</dbReference>
<dbReference type="InterPro" id="IPR036286">
    <property type="entry name" value="LexA/Signal_pep-like_sf"/>
</dbReference>
<dbReference type="InterPro" id="IPR006199">
    <property type="entry name" value="LexA_DNA-bd_dom"/>
</dbReference>
<dbReference type="InterPro" id="IPR050077">
    <property type="entry name" value="LexA_repressor"/>
</dbReference>
<dbReference type="InterPro" id="IPR006197">
    <property type="entry name" value="Peptidase_S24_LexA"/>
</dbReference>
<dbReference type="InterPro" id="IPR015927">
    <property type="entry name" value="Peptidase_S24_S26A/B/C"/>
</dbReference>
<dbReference type="InterPro" id="IPR036388">
    <property type="entry name" value="WH-like_DNA-bd_sf"/>
</dbReference>
<dbReference type="InterPro" id="IPR036390">
    <property type="entry name" value="WH_DNA-bd_sf"/>
</dbReference>
<dbReference type="NCBIfam" id="TIGR00498">
    <property type="entry name" value="lexA"/>
    <property type="match status" value="1"/>
</dbReference>
<dbReference type="PANTHER" id="PTHR33516">
    <property type="entry name" value="LEXA REPRESSOR"/>
    <property type="match status" value="1"/>
</dbReference>
<dbReference type="PANTHER" id="PTHR33516:SF2">
    <property type="entry name" value="LEXA REPRESSOR-RELATED"/>
    <property type="match status" value="1"/>
</dbReference>
<dbReference type="Pfam" id="PF01726">
    <property type="entry name" value="LexA_DNA_bind"/>
    <property type="match status" value="1"/>
</dbReference>
<dbReference type="Pfam" id="PF00717">
    <property type="entry name" value="Peptidase_S24"/>
    <property type="match status" value="1"/>
</dbReference>
<dbReference type="PRINTS" id="PR00726">
    <property type="entry name" value="LEXASERPTASE"/>
</dbReference>
<dbReference type="SUPFAM" id="SSF51306">
    <property type="entry name" value="LexA/Signal peptidase"/>
    <property type="match status" value="1"/>
</dbReference>
<dbReference type="SUPFAM" id="SSF46785">
    <property type="entry name" value="Winged helix' DNA-binding domain"/>
    <property type="match status" value="1"/>
</dbReference>
<name>LEXA_ROSS1</name>
<proteinExistence type="inferred from homology"/>
<sequence length="218" mass="24280">MRSSDQLSARQRDILGFIEEFTQEHGYPPSIREIQDGLRISSTSVVAYNLRALESKGLIDRDGRVSRGIKIKNMTPMPLSRAQGGRVPLLGVITAGQPLPNPEDTSTTAVEMIEVPVDLAPPEKLQNVYALKVRGHSMIDALIDDGDIVLMRYQETADNGQMVAVRIEDDNAVTLKRFYREGDKVRLQPANVTMEPIYVDAARVHIQGRVVGVLRSMW</sequence>
<evidence type="ECO:0000255" key="1">
    <source>
        <dbReference type="HAMAP-Rule" id="MF_00015"/>
    </source>
</evidence>
<evidence type="ECO:0000305" key="2"/>
<gene>
    <name evidence="1" type="primary">lexA</name>
    <name type="ordered locus">RoseRS_0427</name>
</gene>
<accession>A5UQF5</accession>